<accession>B7J917</accession>
<keyword id="KW-1185">Reference proteome</keyword>
<keyword id="KW-0687">Ribonucleoprotein</keyword>
<keyword id="KW-0689">Ribosomal protein</keyword>
<keyword id="KW-0694">RNA-binding</keyword>
<keyword id="KW-0699">rRNA-binding</keyword>
<protein>
    <recommendedName>
        <fullName evidence="1">Small ribosomal subunit protein bS6</fullName>
    </recommendedName>
    <alternativeName>
        <fullName evidence="3">30S ribosomal protein S6</fullName>
    </alternativeName>
</protein>
<feature type="chain" id="PRO_1000120696" description="Small ribosomal subunit protein bS6">
    <location>
        <begin position="1"/>
        <end position="134"/>
    </location>
</feature>
<feature type="region of interest" description="Disordered" evidence="2">
    <location>
        <begin position="100"/>
        <end position="134"/>
    </location>
</feature>
<feature type="compositionally biased region" description="Basic and acidic residues" evidence="2">
    <location>
        <begin position="103"/>
        <end position="115"/>
    </location>
</feature>
<reference key="1">
    <citation type="journal article" date="2008" name="BMC Genomics">
        <title>Acidithiobacillus ferrooxidans metabolism: from genome sequence to industrial applications.</title>
        <authorList>
            <person name="Valdes J."/>
            <person name="Pedroso I."/>
            <person name="Quatrini R."/>
            <person name="Dodson R.J."/>
            <person name="Tettelin H."/>
            <person name="Blake R. II"/>
            <person name="Eisen J.A."/>
            <person name="Holmes D.S."/>
        </authorList>
    </citation>
    <scope>NUCLEOTIDE SEQUENCE [LARGE SCALE GENOMIC DNA]</scope>
    <source>
        <strain>ATCC 23270 / DSM 14882 / CIP 104768 / NCIMB 8455</strain>
    </source>
</reference>
<gene>
    <name evidence="1" type="primary">rpsF</name>
    <name type="ordered locus">AFE_2824</name>
</gene>
<sequence length="134" mass="15445">MRHYEIVFLVHPDQSEQVPQMIERYRGMIESDGGHFHRLEDWGRRQLAYPIKKAHKAHYVLMNIECSSVALAELEDAFRFNDAVLRHLILARDEAVTSPSFLARDETDRRERSEETAEGEGEPDHSANEAVVTA</sequence>
<name>RS6_ACIF2</name>
<organism>
    <name type="scientific">Acidithiobacillus ferrooxidans (strain ATCC 23270 / DSM 14882 / CIP 104768 / NCIMB 8455)</name>
    <name type="common">Ferrobacillus ferrooxidans (strain ATCC 23270)</name>
    <dbReference type="NCBI Taxonomy" id="243159"/>
    <lineage>
        <taxon>Bacteria</taxon>
        <taxon>Pseudomonadati</taxon>
        <taxon>Pseudomonadota</taxon>
        <taxon>Acidithiobacillia</taxon>
        <taxon>Acidithiobacillales</taxon>
        <taxon>Acidithiobacillaceae</taxon>
        <taxon>Acidithiobacillus</taxon>
    </lineage>
</organism>
<evidence type="ECO:0000255" key="1">
    <source>
        <dbReference type="HAMAP-Rule" id="MF_00360"/>
    </source>
</evidence>
<evidence type="ECO:0000256" key="2">
    <source>
        <dbReference type="SAM" id="MobiDB-lite"/>
    </source>
</evidence>
<evidence type="ECO:0000305" key="3"/>
<comment type="function">
    <text evidence="1">Binds together with bS18 to 16S ribosomal RNA.</text>
</comment>
<comment type="similarity">
    <text evidence="1">Belongs to the bacterial ribosomal protein bS6 family.</text>
</comment>
<proteinExistence type="inferred from homology"/>
<dbReference type="EMBL" id="CP001219">
    <property type="protein sequence ID" value="ACK78919.1"/>
    <property type="molecule type" value="Genomic_DNA"/>
</dbReference>
<dbReference type="RefSeq" id="WP_009562431.1">
    <property type="nucleotide sequence ID" value="NC_011761.1"/>
</dbReference>
<dbReference type="SMR" id="B7J917"/>
<dbReference type="STRING" id="243159.AFE_2824"/>
<dbReference type="PaxDb" id="243159-AFE_2824"/>
<dbReference type="GeneID" id="65281853"/>
<dbReference type="KEGG" id="afr:AFE_2824"/>
<dbReference type="eggNOG" id="COG0360">
    <property type="taxonomic scope" value="Bacteria"/>
</dbReference>
<dbReference type="HOGENOM" id="CLU_113441_6_0_6"/>
<dbReference type="Proteomes" id="UP000001362">
    <property type="component" value="Chromosome"/>
</dbReference>
<dbReference type="GO" id="GO:0022627">
    <property type="term" value="C:cytosolic small ribosomal subunit"/>
    <property type="evidence" value="ECO:0007669"/>
    <property type="project" value="TreeGrafter"/>
</dbReference>
<dbReference type="GO" id="GO:0070181">
    <property type="term" value="F:small ribosomal subunit rRNA binding"/>
    <property type="evidence" value="ECO:0007669"/>
    <property type="project" value="TreeGrafter"/>
</dbReference>
<dbReference type="GO" id="GO:0003735">
    <property type="term" value="F:structural constituent of ribosome"/>
    <property type="evidence" value="ECO:0007669"/>
    <property type="project" value="InterPro"/>
</dbReference>
<dbReference type="GO" id="GO:0006412">
    <property type="term" value="P:translation"/>
    <property type="evidence" value="ECO:0007669"/>
    <property type="project" value="UniProtKB-UniRule"/>
</dbReference>
<dbReference type="CDD" id="cd00473">
    <property type="entry name" value="bS6"/>
    <property type="match status" value="1"/>
</dbReference>
<dbReference type="Gene3D" id="3.30.70.60">
    <property type="match status" value="1"/>
</dbReference>
<dbReference type="HAMAP" id="MF_00360">
    <property type="entry name" value="Ribosomal_bS6"/>
    <property type="match status" value="1"/>
</dbReference>
<dbReference type="InterPro" id="IPR000529">
    <property type="entry name" value="Ribosomal_bS6"/>
</dbReference>
<dbReference type="InterPro" id="IPR020815">
    <property type="entry name" value="Ribosomal_bS6_CS"/>
</dbReference>
<dbReference type="InterPro" id="IPR035980">
    <property type="entry name" value="Ribosomal_bS6_sf"/>
</dbReference>
<dbReference type="InterPro" id="IPR020814">
    <property type="entry name" value="Ribosomal_S6_plastid/chlpt"/>
</dbReference>
<dbReference type="InterPro" id="IPR014717">
    <property type="entry name" value="Transl_elong_EF1B/ribsomal_bS6"/>
</dbReference>
<dbReference type="NCBIfam" id="TIGR00166">
    <property type="entry name" value="S6"/>
    <property type="match status" value="1"/>
</dbReference>
<dbReference type="PANTHER" id="PTHR21011">
    <property type="entry name" value="MITOCHONDRIAL 28S RIBOSOMAL PROTEIN S6"/>
    <property type="match status" value="1"/>
</dbReference>
<dbReference type="PANTHER" id="PTHR21011:SF1">
    <property type="entry name" value="SMALL RIBOSOMAL SUBUNIT PROTEIN BS6M"/>
    <property type="match status" value="1"/>
</dbReference>
<dbReference type="Pfam" id="PF01250">
    <property type="entry name" value="Ribosomal_S6"/>
    <property type="match status" value="1"/>
</dbReference>
<dbReference type="SUPFAM" id="SSF54995">
    <property type="entry name" value="Ribosomal protein S6"/>
    <property type="match status" value="1"/>
</dbReference>
<dbReference type="PROSITE" id="PS01048">
    <property type="entry name" value="RIBOSOMAL_S6"/>
    <property type="match status" value="1"/>
</dbReference>